<keyword id="KW-0997">Cell inner membrane</keyword>
<keyword id="KW-1003">Cell membrane</keyword>
<keyword id="KW-0472">Membrane</keyword>
<keyword id="KW-0812">Transmembrane</keyword>
<keyword id="KW-1133">Transmembrane helix</keyword>
<keyword id="KW-0813">Transport</keyword>
<sequence length="413" mass="45315">MFNPLSVAIGLRYLRAKRRNGFISFISMASILGIALGVTVLITTLAVMSGFQKEIRDRLLQMAAHATVSAQGAPMHDWQHAVALAMTDPRVAGAAPYIESEALLQGERHQPAMMRGIVPNQEDKVSVLAQKLKVGSIDSLKPGEYNILLGKELALWLGVDVGDSVIVLLSQTQTTPVGTMPRMKRFTVSGLFEVGYNEIDRGLAVVNMEDMQKVMRMDGVTGVRLKLHDMDHAWDVARDLAVRLNGPYLVSDWTRENANLYSSLKMEKTVMGILLSLIIAMGAFNLVSSQVMLVTDKQADIAILRTLGLSPAGVMRVFMVQGSLIGIIGTLSGVIGGVVLTWNLERILKLIESTFNITLLPEDVYYITGLPTDMQFPDVVVITLMALVMSFIATLYPAWRAARIQPAEALRYE</sequence>
<dbReference type="EMBL" id="AE003849">
    <property type="protein sequence ID" value="AAF83886.1"/>
    <property type="molecule type" value="Genomic_DNA"/>
</dbReference>
<dbReference type="PIR" id="A82726">
    <property type="entry name" value="A82726"/>
</dbReference>
<dbReference type="RefSeq" id="WP_010893595.1">
    <property type="nucleotide sequence ID" value="NC_002488.3"/>
</dbReference>
<dbReference type="SMR" id="Q9PEF2"/>
<dbReference type="STRING" id="160492.XF_1076"/>
<dbReference type="KEGG" id="xfa:XF_1076"/>
<dbReference type="eggNOG" id="COG4591">
    <property type="taxonomic scope" value="Bacteria"/>
</dbReference>
<dbReference type="HOGENOM" id="CLU_000604_8_1_6"/>
<dbReference type="Proteomes" id="UP000000812">
    <property type="component" value="Chromosome"/>
</dbReference>
<dbReference type="GO" id="GO:0098797">
    <property type="term" value="C:plasma membrane protein complex"/>
    <property type="evidence" value="ECO:0007669"/>
    <property type="project" value="TreeGrafter"/>
</dbReference>
<dbReference type="GO" id="GO:0044874">
    <property type="term" value="P:lipoprotein localization to outer membrane"/>
    <property type="evidence" value="ECO:0007669"/>
    <property type="project" value="TreeGrafter"/>
</dbReference>
<dbReference type="GO" id="GO:0042953">
    <property type="term" value="P:lipoprotein transport"/>
    <property type="evidence" value="ECO:0007669"/>
    <property type="project" value="InterPro"/>
</dbReference>
<dbReference type="InterPro" id="IPR003838">
    <property type="entry name" value="ABC3_permease_C"/>
</dbReference>
<dbReference type="InterPro" id="IPR051447">
    <property type="entry name" value="Lipoprotein-release_system"/>
</dbReference>
<dbReference type="InterPro" id="IPR011925">
    <property type="entry name" value="LolCE_TM"/>
</dbReference>
<dbReference type="InterPro" id="IPR025857">
    <property type="entry name" value="MacB_PCD"/>
</dbReference>
<dbReference type="NCBIfam" id="TIGR02212">
    <property type="entry name" value="lolCE"/>
    <property type="match status" value="1"/>
</dbReference>
<dbReference type="PANTHER" id="PTHR30489">
    <property type="entry name" value="LIPOPROTEIN-RELEASING SYSTEM TRANSMEMBRANE PROTEIN LOLE"/>
    <property type="match status" value="1"/>
</dbReference>
<dbReference type="PANTHER" id="PTHR30489:SF0">
    <property type="entry name" value="LIPOPROTEIN-RELEASING SYSTEM TRANSMEMBRANE PROTEIN LOLE"/>
    <property type="match status" value="1"/>
</dbReference>
<dbReference type="Pfam" id="PF02687">
    <property type="entry name" value="FtsX"/>
    <property type="match status" value="1"/>
</dbReference>
<dbReference type="Pfam" id="PF12704">
    <property type="entry name" value="MacB_PCD"/>
    <property type="match status" value="1"/>
</dbReference>
<protein>
    <recommendedName>
        <fullName>Lipoprotein-releasing system transmembrane protein LolC</fullName>
    </recommendedName>
</protein>
<evidence type="ECO:0000250" key="1"/>
<evidence type="ECO:0000255" key="2"/>
<evidence type="ECO:0000305" key="3"/>
<proteinExistence type="inferred from homology"/>
<organism>
    <name type="scientific">Xylella fastidiosa (strain 9a5c)</name>
    <dbReference type="NCBI Taxonomy" id="160492"/>
    <lineage>
        <taxon>Bacteria</taxon>
        <taxon>Pseudomonadati</taxon>
        <taxon>Pseudomonadota</taxon>
        <taxon>Gammaproteobacteria</taxon>
        <taxon>Lysobacterales</taxon>
        <taxon>Lysobacteraceae</taxon>
        <taxon>Xylella</taxon>
    </lineage>
</organism>
<gene>
    <name type="primary">lolC</name>
    <name type="ordered locus">XF_1076</name>
</gene>
<name>LOLC_XYLFA</name>
<accession>Q9PEF2</accession>
<reference key="1">
    <citation type="journal article" date="2000" name="Nature">
        <title>The genome sequence of the plant pathogen Xylella fastidiosa.</title>
        <authorList>
            <person name="Simpson A.J.G."/>
            <person name="Reinach F.C."/>
            <person name="Arruda P."/>
            <person name="Abreu F.A."/>
            <person name="Acencio M."/>
            <person name="Alvarenga R."/>
            <person name="Alves L.M.C."/>
            <person name="Araya J.E."/>
            <person name="Baia G.S."/>
            <person name="Baptista C.S."/>
            <person name="Barros M.H."/>
            <person name="Bonaccorsi E.D."/>
            <person name="Bordin S."/>
            <person name="Bove J.M."/>
            <person name="Briones M.R.S."/>
            <person name="Bueno M.R.P."/>
            <person name="Camargo A.A."/>
            <person name="Camargo L.E.A."/>
            <person name="Carraro D.M."/>
            <person name="Carrer H."/>
            <person name="Colauto N.B."/>
            <person name="Colombo C."/>
            <person name="Costa F.F."/>
            <person name="Costa M.C.R."/>
            <person name="Costa-Neto C.M."/>
            <person name="Coutinho L.L."/>
            <person name="Cristofani M."/>
            <person name="Dias-Neto E."/>
            <person name="Docena C."/>
            <person name="El-Dorry H."/>
            <person name="Facincani A.P."/>
            <person name="Ferreira A.J.S."/>
            <person name="Ferreira V.C.A."/>
            <person name="Ferro J.A."/>
            <person name="Fraga J.S."/>
            <person name="Franca S.C."/>
            <person name="Franco M.C."/>
            <person name="Frohme M."/>
            <person name="Furlan L.R."/>
            <person name="Garnier M."/>
            <person name="Goldman G.H."/>
            <person name="Goldman M.H.S."/>
            <person name="Gomes S.L."/>
            <person name="Gruber A."/>
            <person name="Ho P.L."/>
            <person name="Hoheisel J.D."/>
            <person name="Junqueira M.L."/>
            <person name="Kemper E.L."/>
            <person name="Kitajima J.P."/>
            <person name="Krieger J.E."/>
            <person name="Kuramae E.E."/>
            <person name="Laigret F."/>
            <person name="Lambais M.R."/>
            <person name="Leite L.C.C."/>
            <person name="Lemos E.G.M."/>
            <person name="Lemos M.V.F."/>
            <person name="Lopes S.A."/>
            <person name="Lopes C.R."/>
            <person name="Machado J.A."/>
            <person name="Machado M.A."/>
            <person name="Madeira A.M.B.N."/>
            <person name="Madeira H.M.F."/>
            <person name="Marino C.L."/>
            <person name="Marques M.V."/>
            <person name="Martins E.A.L."/>
            <person name="Martins E.M.F."/>
            <person name="Matsukuma A.Y."/>
            <person name="Menck C.F.M."/>
            <person name="Miracca E.C."/>
            <person name="Miyaki C.Y."/>
            <person name="Monteiro-Vitorello C.B."/>
            <person name="Moon D.H."/>
            <person name="Nagai M.A."/>
            <person name="Nascimento A.L.T.O."/>
            <person name="Netto L.E.S."/>
            <person name="Nhani A. Jr."/>
            <person name="Nobrega F.G."/>
            <person name="Nunes L.R."/>
            <person name="Oliveira M.A."/>
            <person name="de Oliveira M.C."/>
            <person name="de Oliveira R.C."/>
            <person name="Palmieri D.A."/>
            <person name="Paris A."/>
            <person name="Peixoto B.R."/>
            <person name="Pereira G.A.G."/>
            <person name="Pereira H.A. Jr."/>
            <person name="Pesquero J.B."/>
            <person name="Quaggio R.B."/>
            <person name="Roberto P.G."/>
            <person name="Rodrigues V."/>
            <person name="de Rosa A.J.M."/>
            <person name="de Rosa V.E. Jr."/>
            <person name="de Sa R.G."/>
            <person name="Santelli R.V."/>
            <person name="Sawasaki H.E."/>
            <person name="da Silva A.C.R."/>
            <person name="da Silva A.M."/>
            <person name="da Silva F.R."/>
            <person name="Silva W.A. Jr."/>
            <person name="da Silveira J.F."/>
            <person name="Silvestri M.L.Z."/>
            <person name="Siqueira W.J."/>
            <person name="de Souza A.A."/>
            <person name="de Souza A.P."/>
            <person name="Terenzi M.F."/>
            <person name="Truffi D."/>
            <person name="Tsai S.M."/>
            <person name="Tsuhako M.H."/>
            <person name="Vallada H."/>
            <person name="Van Sluys M.A."/>
            <person name="Verjovski-Almeida S."/>
            <person name="Vettore A.L."/>
            <person name="Zago M.A."/>
            <person name="Zatz M."/>
            <person name="Meidanis J."/>
            <person name="Setubal J.C."/>
        </authorList>
    </citation>
    <scope>NUCLEOTIDE SEQUENCE [LARGE SCALE GENOMIC DNA]</scope>
    <source>
        <strain>9a5c</strain>
    </source>
</reference>
<comment type="function">
    <text evidence="1">Part of an ATP-dependent transport system responsible for the release of lipoproteins targeted to the outer membrane from the inner membrane. Such a release is dependent of the sorting-signal (absence of an Asp at position 2 of the mature lipoprotein) and of LolA (By similarity).</text>
</comment>
<comment type="subcellular location">
    <subcellularLocation>
        <location evidence="1">Cell inner membrane</location>
        <topology evidence="1">Multi-pass membrane protein</topology>
    </subcellularLocation>
</comment>
<comment type="similarity">
    <text evidence="3">Belongs to the ABC-4 integral membrane protein family. LolC/E subfamily.</text>
</comment>
<feature type="chain" id="PRO_0000201816" description="Lipoprotein-releasing system transmembrane protein LolC">
    <location>
        <begin position="1"/>
        <end position="413"/>
    </location>
</feature>
<feature type="transmembrane region" description="Helical" evidence="2">
    <location>
        <begin position="22"/>
        <end position="42"/>
    </location>
</feature>
<feature type="transmembrane region" description="Helical" evidence="2">
    <location>
        <begin position="269"/>
        <end position="289"/>
    </location>
</feature>
<feature type="transmembrane region" description="Helical" evidence="2">
    <location>
        <begin position="322"/>
        <end position="342"/>
    </location>
</feature>
<feature type="transmembrane region" description="Helical" evidence="2">
    <location>
        <begin position="379"/>
        <end position="399"/>
    </location>
</feature>